<keyword id="KW-1003">Cell membrane</keyword>
<keyword id="KW-0134">Cell wall</keyword>
<keyword id="KW-0961">Cell wall biogenesis/degradation</keyword>
<keyword id="KW-0378">Hydrolase</keyword>
<keyword id="KW-0449">Lipoprotein</keyword>
<keyword id="KW-0472">Membrane</keyword>
<keyword id="KW-0564">Palmitate</keyword>
<keyword id="KW-1185">Reference proteome</keyword>
<keyword id="KW-0964">Secreted</keyword>
<keyword id="KW-0732">Signal</keyword>
<feature type="signal peptide" evidence="3">
    <location>
        <begin position="1"/>
        <end position="45"/>
    </location>
</feature>
<feature type="chain" id="PRO_0000437269" description="Probable lysophospholipase BODYGUARD 2">
    <location>
        <begin position="46"/>
        <end position="471"/>
    </location>
</feature>
<feature type="domain" description="AB hydrolase-1" evidence="3">
    <location>
        <begin position="193"/>
        <end position="296"/>
    </location>
</feature>
<feature type="active site" evidence="3">
    <location>
        <position position="197"/>
    </location>
</feature>
<feature type="active site" description="Nucleophile" evidence="1">
    <location>
        <position position="271"/>
    </location>
</feature>
<feature type="active site" description="Charge relay system" evidence="1">
    <location>
        <position position="418"/>
    </location>
</feature>
<feature type="active site" description="Charge relay system" evidence="1">
    <location>
        <position position="446"/>
    </location>
</feature>
<feature type="lipid moiety-binding region" description="N-palmitoyl cysteine" evidence="4">
    <location>
        <position position="46"/>
    </location>
</feature>
<accession>Q9FJ24</accession>
<name>BDG2_ARATH</name>
<sequence>MGIARWLNRTVGFFVFALLDIADFLLCYTYKTLDYFLESERKPCYCSSPPEAKAKTEKIIVSERGGYSKVVSLTRSKIHFDEISDTLYSRGPSLLTRLSKLVRSVKCFNYKGLIMRGNVVESCDHHESKKKISKGKKRLMTLNSTVIEKSSTAPRWSDCHCSFCTSWLTSTNRDSLFVKVQQPKDNKKARDNVVFIHGFVSSSAFWTETLFPNFSDSAKSNYRFIAVDLLGYGRSPKPNDSLYTLREHLEMIEKSVISKFKLKTFHIVAHSLGCILALALAVKHPGAIKSLTLLAPPYYKVPKGVQPAQYVMREVARKEVWPPMQFGASVLSWYEHLGRTIGLVLIKNHQLIEFVTRLLTLNRMRTYLIEGFLCHTHNGSFHTLHNIIFGSGAKLDSYLDHVRDHVDCDVAIFHGGKDELIPVECSYSVKSKVPRATVHVIPDKDHITIVVGRQKDFARELELIWQRTKST</sequence>
<protein>
    <recommendedName>
        <fullName evidence="5">Probable lysophospholipase BODYGUARD 2</fullName>
        <shortName evidence="5">AtBDG2</shortName>
        <ecNumber evidence="6">3.1.1.-</ecNumber>
    </recommendedName>
</protein>
<reference key="1">
    <citation type="journal article" date="1998" name="DNA Res.">
        <title>Structural analysis of Arabidopsis thaliana chromosome 5. VII. Sequence features of the regions of 1,013,767 bp covered by sixteen physically assigned P1 and TAC clones.</title>
        <authorList>
            <person name="Nakamura Y."/>
            <person name="Sato S."/>
            <person name="Asamizu E."/>
            <person name="Kaneko T."/>
            <person name="Kotani H."/>
            <person name="Miyajima N."/>
            <person name="Tabata S."/>
        </authorList>
    </citation>
    <scope>NUCLEOTIDE SEQUENCE [LARGE SCALE GENOMIC DNA]</scope>
    <source>
        <strain>cv. Columbia</strain>
    </source>
</reference>
<reference key="2">
    <citation type="journal article" date="2017" name="Plant J.">
        <title>Araport11: a complete reannotation of the Arabidopsis thaliana reference genome.</title>
        <authorList>
            <person name="Cheng C.Y."/>
            <person name="Krishnakumar V."/>
            <person name="Chan A.P."/>
            <person name="Thibaud-Nissen F."/>
            <person name="Schobel S."/>
            <person name="Town C.D."/>
        </authorList>
    </citation>
    <scope>GENOME REANNOTATION</scope>
    <source>
        <strain>cv. Columbia</strain>
    </source>
</reference>
<reference key="3">
    <citation type="journal article" date="2002" name="Science">
        <title>Functional annotation of a full-length Arabidopsis cDNA collection.</title>
        <authorList>
            <person name="Seki M."/>
            <person name="Narusaka M."/>
            <person name="Kamiya A."/>
            <person name="Ishida J."/>
            <person name="Satou M."/>
            <person name="Sakurai T."/>
            <person name="Nakajima M."/>
            <person name="Enju A."/>
            <person name="Akiyama K."/>
            <person name="Oono Y."/>
            <person name="Muramatsu M."/>
            <person name="Hayashizaki Y."/>
            <person name="Kawai J."/>
            <person name="Carninci P."/>
            <person name="Itoh M."/>
            <person name="Ishii Y."/>
            <person name="Arakawa T."/>
            <person name="Shibata K."/>
            <person name="Shinagawa A."/>
            <person name="Shinozaki K."/>
        </authorList>
    </citation>
    <scope>NUCLEOTIDE SEQUENCE [LARGE SCALE MRNA]</scope>
    <source>
        <strain>cv. Columbia</strain>
    </source>
</reference>
<reference key="4">
    <citation type="journal article" date="2003" name="Science">
        <title>Empirical analysis of transcriptional activity in the Arabidopsis genome.</title>
        <authorList>
            <person name="Yamada K."/>
            <person name="Lim J."/>
            <person name="Dale J.M."/>
            <person name="Chen H."/>
            <person name="Shinn P."/>
            <person name="Palm C.J."/>
            <person name="Southwick A.M."/>
            <person name="Wu H.C."/>
            <person name="Kim C.J."/>
            <person name="Nguyen M."/>
            <person name="Pham P.K."/>
            <person name="Cheuk R.F."/>
            <person name="Karlin-Newmann G."/>
            <person name="Liu S.X."/>
            <person name="Lam B."/>
            <person name="Sakano H."/>
            <person name="Wu T."/>
            <person name="Yu G."/>
            <person name="Miranda M."/>
            <person name="Quach H.L."/>
            <person name="Tripp M."/>
            <person name="Chang C.H."/>
            <person name="Lee J.M."/>
            <person name="Toriumi M.J."/>
            <person name="Chan M.M."/>
            <person name="Tang C.C."/>
            <person name="Onodera C.S."/>
            <person name="Deng J.M."/>
            <person name="Akiyama K."/>
            <person name="Ansari Y."/>
            <person name="Arakawa T."/>
            <person name="Banh J."/>
            <person name="Banno F."/>
            <person name="Bowser L."/>
            <person name="Brooks S.Y."/>
            <person name="Carninci P."/>
            <person name="Chao Q."/>
            <person name="Choy N."/>
            <person name="Enju A."/>
            <person name="Goldsmith A.D."/>
            <person name="Gurjal M."/>
            <person name="Hansen N.F."/>
            <person name="Hayashizaki Y."/>
            <person name="Johnson-Hopson C."/>
            <person name="Hsuan V.W."/>
            <person name="Iida K."/>
            <person name="Karnes M."/>
            <person name="Khan S."/>
            <person name="Koesema E."/>
            <person name="Ishida J."/>
            <person name="Jiang P.X."/>
            <person name="Jones T."/>
            <person name="Kawai J."/>
            <person name="Kamiya A."/>
            <person name="Meyers C."/>
            <person name="Nakajima M."/>
            <person name="Narusaka M."/>
            <person name="Seki M."/>
            <person name="Sakurai T."/>
            <person name="Satou M."/>
            <person name="Tamse R."/>
            <person name="Vaysberg M."/>
            <person name="Wallender E.K."/>
            <person name="Wong C."/>
            <person name="Yamamura Y."/>
            <person name="Yuan S."/>
            <person name="Shinozaki K."/>
            <person name="Davis R.W."/>
            <person name="Theologis A."/>
            <person name="Ecker J.R."/>
        </authorList>
    </citation>
    <scope>NUCLEOTIDE SEQUENCE [LARGE SCALE MRNA]</scope>
    <source>
        <strain>cv. Columbia</strain>
    </source>
</reference>
<reference key="5">
    <citation type="journal article" date="2006" name="Plant Cell">
        <title>The epidermis-specific extracellular BODYGUARD controls cuticle development and morphogenesis in Arabidopsis.</title>
        <authorList>
            <person name="Kurdyukov S."/>
            <person name="Faust A."/>
            <person name="Nawrath C."/>
            <person name="Baer S."/>
            <person name="Voisin D."/>
            <person name="Efremova N."/>
            <person name="Franke R."/>
            <person name="Schreiber L."/>
            <person name="Saedler H."/>
            <person name="Metraux J.-P."/>
            <person name="Yephremov A."/>
        </authorList>
    </citation>
    <scope>GENE FAMILY</scope>
    <scope>NOMENCLATURE</scope>
    <source>
        <strain>cv. Columbia</strain>
    </source>
</reference>
<reference key="6">
    <citation type="journal article" date="2013" name="Arabidopsis Book">
        <title>Acyl-lipid metabolism.</title>
        <authorList>
            <person name="Li-Beisson Y."/>
            <person name="Shorrosh B."/>
            <person name="Beisson F."/>
            <person name="Andersson M.X."/>
            <person name="Arondel V."/>
            <person name="Bates P.D."/>
            <person name="Baud S."/>
            <person name="Bird D."/>
            <person name="Debono A."/>
            <person name="Durrett T.P."/>
            <person name="Franke R.B."/>
            <person name="Graham I.A."/>
            <person name="Katayama K."/>
            <person name="Kelly A.A."/>
            <person name="Larson T."/>
            <person name="Markham J.E."/>
            <person name="Miquel M."/>
            <person name="Molina I."/>
            <person name="Nishida I."/>
            <person name="Rowland O."/>
            <person name="Samuels L."/>
            <person name="Schmid K.M."/>
            <person name="Wada H."/>
            <person name="Welti R."/>
            <person name="Xu C."/>
            <person name="Zallot R."/>
            <person name="Ohlrogge J."/>
        </authorList>
    </citation>
    <scope>REVIEW</scope>
</reference>
<comment type="function">
    <text evidence="2">Involved in cuticle development and morphogenesis.</text>
</comment>
<comment type="subcellular location">
    <subcellularLocation>
        <location evidence="3">Cell membrane</location>
        <topology evidence="3">Lipid-anchor</topology>
    </subcellularLocation>
    <subcellularLocation>
        <location evidence="2">Secreted</location>
        <location evidence="2">Cell wall</location>
    </subcellularLocation>
</comment>
<organism>
    <name type="scientific">Arabidopsis thaliana</name>
    <name type="common">Mouse-ear cress</name>
    <dbReference type="NCBI Taxonomy" id="3702"/>
    <lineage>
        <taxon>Eukaryota</taxon>
        <taxon>Viridiplantae</taxon>
        <taxon>Streptophyta</taxon>
        <taxon>Embryophyta</taxon>
        <taxon>Tracheophyta</taxon>
        <taxon>Spermatophyta</taxon>
        <taxon>Magnoliopsida</taxon>
        <taxon>eudicotyledons</taxon>
        <taxon>Gunneridae</taxon>
        <taxon>Pentapetalae</taxon>
        <taxon>rosids</taxon>
        <taxon>malvids</taxon>
        <taxon>Brassicales</taxon>
        <taxon>Brassicaceae</taxon>
        <taxon>Camelineae</taxon>
        <taxon>Arabidopsis</taxon>
    </lineage>
</organism>
<dbReference type="EC" id="3.1.1.-" evidence="6"/>
<dbReference type="EMBL" id="AB016871">
    <property type="protein sequence ID" value="BAB10665.1"/>
    <property type="molecule type" value="Genomic_DNA"/>
</dbReference>
<dbReference type="EMBL" id="CP002688">
    <property type="protein sequence ID" value="AED94741.1"/>
    <property type="molecule type" value="Genomic_DNA"/>
</dbReference>
<dbReference type="EMBL" id="AK117277">
    <property type="protein sequence ID" value="BAC41950.1"/>
    <property type="molecule type" value="mRNA"/>
</dbReference>
<dbReference type="EMBL" id="BT005385">
    <property type="protein sequence ID" value="AAO63449.1"/>
    <property type="molecule type" value="mRNA"/>
</dbReference>
<dbReference type="RefSeq" id="NP_199005.1">
    <property type="nucleotide sequence ID" value="NM_123555.3"/>
</dbReference>
<dbReference type="SMR" id="Q9FJ24"/>
<dbReference type="FunCoup" id="Q9FJ24">
    <property type="interactions" value="1"/>
</dbReference>
<dbReference type="STRING" id="3702.Q9FJ24"/>
<dbReference type="ESTHER" id="arath-At5g41900">
    <property type="family name" value="Bodyguard"/>
</dbReference>
<dbReference type="MEROPS" id="S33.A28"/>
<dbReference type="iPTMnet" id="Q9FJ24"/>
<dbReference type="PaxDb" id="3702-AT5G41900.1"/>
<dbReference type="ProteomicsDB" id="241211"/>
<dbReference type="EnsemblPlants" id="AT5G41900.1">
    <property type="protein sequence ID" value="AT5G41900.1"/>
    <property type="gene ID" value="AT5G41900"/>
</dbReference>
<dbReference type="GeneID" id="834195"/>
<dbReference type="Gramene" id="AT5G41900.1">
    <property type="protein sequence ID" value="AT5G41900.1"/>
    <property type="gene ID" value="AT5G41900"/>
</dbReference>
<dbReference type="KEGG" id="ath:AT5G41900"/>
<dbReference type="Araport" id="AT5G41900"/>
<dbReference type="TAIR" id="AT5G41900"/>
<dbReference type="eggNOG" id="KOG1454">
    <property type="taxonomic scope" value="Eukaryota"/>
</dbReference>
<dbReference type="HOGENOM" id="CLU_051935_0_0_1"/>
<dbReference type="InParanoid" id="Q9FJ24"/>
<dbReference type="OMA" id="VVESCDH"/>
<dbReference type="PhylomeDB" id="Q9FJ24"/>
<dbReference type="PRO" id="PR:Q9FJ24"/>
<dbReference type="Proteomes" id="UP000006548">
    <property type="component" value="Chromosome 5"/>
</dbReference>
<dbReference type="ExpressionAtlas" id="Q9FJ24">
    <property type="expression patterns" value="baseline and differential"/>
</dbReference>
<dbReference type="GO" id="GO:0005576">
    <property type="term" value="C:extracellular region"/>
    <property type="evidence" value="ECO:0007669"/>
    <property type="project" value="UniProtKB-KW"/>
</dbReference>
<dbReference type="GO" id="GO:0005886">
    <property type="term" value="C:plasma membrane"/>
    <property type="evidence" value="ECO:0007669"/>
    <property type="project" value="UniProtKB-SubCell"/>
</dbReference>
<dbReference type="GO" id="GO:0016787">
    <property type="term" value="F:hydrolase activity"/>
    <property type="evidence" value="ECO:0007669"/>
    <property type="project" value="UniProtKB-KW"/>
</dbReference>
<dbReference type="GO" id="GO:0071555">
    <property type="term" value="P:cell wall organization"/>
    <property type="evidence" value="ECO:0007669"/>
    <property type="project" value="UniProtKB-KW"/>
</dbReference>
<dbReference type="FunFam" id="3.40.50.1820:FF:000318">
    <property type="entry name" value="Probable lysophospholipase BODYGUARD 1"/>
    <property type="match status" value="1"/>
</dbReference>
<dbReference type="Gene3D" id="3.40.50.1820">
    <property type="entry name" value="alpha/beta hydrolase"/>
    <property type="match status" value="1"/>
</dbReference>
<dbReference type="InterPro" id="IPR000073">
    <property type="entry name" value="AB_hydrolase_1"/>
</dbReference>
<dbReference type="InterPro" id="IPR029058">
    <property type="entry name" value="AB_hydrolase_fold"/>
</dbReference>
<dbReference type="PANTHER" id="PTHR43689">
    <property type="entry name" value="HYDROLASE"/>
    <property type="match status" value="1"/>
</dbReference>
<dbReference type="PANTHER" id="PTHR43689:SF36">
    <property type="entry name" value="LYSOPHOSPHOLIPASE BODYGUARD 2-RELATED"/>
    <property type="match status" value="1"/>
</dbReference>
<dbReference type="Pfam" id="PF00561">
    <property type="entry name" value="Abhydrolase_1"/>
    <property type="match status" value="1"/>
</dbReference>
<dbReference type="PRINTS" id="PR00111">
    <property type="entry name" value="ABHYDROLASE"/>
</dbReference>
<dbReference type="SUPFAM" id="SSF53474">
    <property type="entry name" value="alpha/beta-Hydrolases"/>
    <property type="match status" value="1"/>
</dbReference>
<gene>
    <name evidence="5" type="primary">BDG2</name>
    <name evidence="7" type="ordered locus">At5g41900</name>
    <name evidence="8" type="ORF">K16L22.19</name>
</gene>
<evidence type="ECO:0000250" key="1">
    <source>
        <dbReference type="UniProtKB" id="P04180"/>
    </source>
</evidence>
<evidence type="ECO:0000250" key="2">
    <source>
        <dbReference type="UniProtKB" id="Q8LFX7"/>
    </source>
</evidence>
<evidence type="ECO:0000255" key="3"/>
<evidence type="ECO:0000255" key="4">
    <source>
        <dbReference type="PROSITE-ProRule" id="PRU00303"/>
    </source>
</evidence>
<evidence type="ECO:0000303" key="5">
    <source>
    </source>
</evidence>
<evidence type="ECO:0000305" key="6"/>
<evidence type="ECO:0000312" key="7">
    <source>
        <dbReference type="Araport" id="AT5G41900"/>
    </source>
</evidence>
<evidence type="ECO:0000312" key="8">
    <source>
        <dbReference type="EMBL" id="BAB10665.1"/>
    </source>
</evidence>
<proteinExistence type="evidence at transcript level"/>